<evidence type="ECO:0000250" key="1"/>
<evidence type="ECO:0000255" key="2"/>
<evidence type="ECO:0000256" key="3">
    <source>
        <dbReference type="SAM" id="MobiDB-lite"/>
    </source>
</evidence>
<evidence type="ECO:0000305" key="4"/>
<feature type="chain" id="PRO_0000308785" description="60S ribosomal subunit assembly/export protein loc1">
    <location>
        <begin position="1"/>
        <end position="190"/>
    </location>
</feature>
<feature type="region of interest" description="Disordered" evidence="3">
    <location>
        <begin position="1"/>
        <end position="69"/>
    </location>
</feature>
<feature type="region of interest" description="Disordered" evidence="3">
    <location>
        <begin position="129"/>
        <end position="190"/>
    </location>
</feature>
<feature type="coiled-coil region" evidence="2">
    <location>
        <begin position="109"/>
        <end position="165"/>
    </location>
</feature>
<feature type="compositionally biased region" description="Low complexity" evidence="3">
    <location>
        <begin position="1"/>
        <end position="29"/>
    </location>
</feature>
<feature type="compositionally biased region" description="Basic and acidic residues" evidence="3">
    <location>
        <begin position="39"/>
        <end position="49"/>
    </location>
</feature>
<feature type="compositionally biased region" description="Basic and acidic residues" evidence="3">
    <location>
        <begin position="129"/>
        <end position="151"/>
    </location>
</feature>
<feature type="compositionally biased region" description="Basic residues" evidence="3">
    <location>
        <begin position="181"/>
        <end position="190"/>
    </location>
</feature>
<organism>
    <name type="scientific">Aspergillus fumigatus (strain ATCC MYA-4609 / CBS 101355 / FGSC A1100 / Af293)</name>
    <name type="common">Neosartorya fumigata</name>
    <dbReference type="NCBI Taxonomy" id="330879"/>
    <lineage>
        <taxon>Eukaryota</taxon>
        <taxon>Fungi</taxon>
        <taxon>Dikarya</taxon>
        <taxon>Ascomycota</taxon>
        <taxon>Pezizomycotina</taxon>
        <taxon>Eurotiomycetes</taxon>
        <taxon>Eurotiomycetidae</taxon>
        <taxon>Eurotiales</taxon>
        <taxon>Aspergillaceae</taxon>
        <taxon>Aspergillus</taxon>
        <taxon>Aspergillus subgen. Fumigati</taxon>
    </lineage>
</organism>
<reference key="1">
    <citation type="journal article" date="2005" name="Nature">
        <title>Genomic sequence of the pathogenic and allergenic filamentous fungus Aspergillus fumigatus.</title>
        <authorList>
            <person name="Nierman W.C."/>
            <person name="Pain A."/>
            <person name="Anderson M.J."/>
            <person name="Wortman J.R."/>
            <person name="Kim H.S."/>
            <person name="Arroyo J."/>
            <person name="Berriman M."/>
            <person name="Abe K."/>
            <person name="Archer D.B."/>
            <person name="Bermejo C."/>
            <person name="Bennett J.W."/>
            <person name="Bowyer P."/>
            <person name="Chen D."/>
            <person name="Collins M."/>
            <person name="Coulsen R."/>
            <person name="Davies R."/>
            <person name="Dyer P.S."/>
            <person name="Farman M.L."/>
            <person name="Fedorova N."/>
            <person name="Fedorova N.D."/>
            <person name="Feldblyum T.V."/>
            <person name="Fischer R."/>
            <person name="Fosker N."/>
            <person name="Fraser A."/>
            <person name="Garcia J.L."/>
            <person name="Garcia M.J."/>
            <person name="Goble A."/>
            <person name="Goldman G.H."/>
            <person name="Gomi K."/>
            <person name="Griffith-Jones S."/>
            <person name="Gwilliam R."/>
            <person name="Haas B.J."/>
            <person name="Haas H."/>
            <person name="Harris D.E."/>
            <person name="Horiuchi H."/>
            <person name="Huang J."/>
            <person name="Humphray S."/>
            <person name="Jimenez J."/>
            <person name="Keller N."/>
            <person name="Khouri H."/>
            <person name="Kitamoto K."/>
            <person name="Kobayashi T."/>
            <person name="Konzack S."/>
            <person name="Kulkarni R."/>
            <person name="Kumagai T."/>
            <person name="Lafton A."/>
            <person name="Latge J.-P."/>
            <person name="Li W."/>
            <person name="Lord A."/>
            <person name="Lu C."/>
            <person name="Majoros W.H."/>
            <person name="May G.S."/>
            <person name="Miller B.L."/>
            <person name="Mohamoud Y."/>
            <person name="Molina M."/>
            <person name="Monod M."/>
            <person name="Mouyna I."/>
            <person name="Mulligan S."/>
            <person name="Murphy L.D."/>
            <person name="O'Neil S."/>
            <person name="Paulsen I."/>
            <person name="Penalva M.A."/>
            <person name="Pertea M."/>
            <person name="Price C."/>
            <person name="Pritchard B.L."/>
            <person name="Quail M.A."/>
            <person name="Rabbinowitsch E."/>
            <person name="Rawlins N."/>
            <person name="Rajandream M.A."/>
            <person name="Reichard U."/>
            <person name="Renauld H."/>
            <person name="Robson G.D."/>
            <person name="Rodriguez de Cordoba S."/>
            <person name="Rodriguez-Pena J.M."/>
            <person name="Ronning C.M."/>
            <person name="Rutter S."/>
            <person name="Salzberg S.L."/>
            <person name="Sanchez M."/>
            <person name="Sanchez-Ferrero J.C."/>
            <person name="Saunders D."/>
            <person name="Seeger K."/>
            <person name="Squares R."/>
            <person name="Squares S."/>
            <person name="Takeuchi M."/>
            <person name="Tekaia F."/>
            <person name="Turner G."/>
            <person name="Vazquez de Aldana C.R."/>
            <person name="Weidman J."/>
            <person name="White O."/>
            <person name="Woodward J.R."/>
            <person name="Yu J.-H."/>
            <person name="Fraser C.M."/>
            <person name="Galagan J.E."/>
            <person name="Asai K."/>
            <person name="Machida M."/>
            <person name="Hall N."/>
            <person name="Barrell B.G."/>
            <person name="Denning D.W."/>
        </authorList>
    </citation>
    <scope>NUCLEOTIDE SEQUENCE [LARGE SCALE GENOMIC DNA]</scope>
    <source>
        <strain>ATCC MYA-4609 / CBS 101355 / FGSC A1100 / Af293</strain>
    </source>
</reference>
<sequence length="190" mass="21099">MAPNKPSVKGKSSSKGDSGKSKPLSSASKVSKKHAKRPPPKEVKSKARTESSLLKKTKKREYTEEELGLPKLNMITPVGVVKPKGKKKGKVFVDDQEGMMTILAMVNAEQEGHIESKLQKARQLEEIREAKRKEAEARHAEKKNKLEEAKQSIRQKRKRKSSGNEDSKSDASTSKSSSKSKEKRKSVSFA</sequence>
<protein>
    <recommendedName>
        <fullName>60S ribosomal subunit assembly/export protein loc1</fullName>
    </recommendedName>
</protein>
<name>LOC1_ASPFU</name>
<comment type="function">
    <text evidence="1">Required for efficient assembly and nuclear export of the 60S ribosomal subunit.</text>
</comment>
<comment type="subunit">
    <text evidence="1">Component of the 66S pre-ribosomal particle.</text>
</comment>
<comment type="subcellular location">
    <subcellularLocation>
        <location evidence="1">Nucleus</location>
        <location evidence="1">Nucleolus</location>
    </subcellularLocation>
</comment>
<comment type="similarity">
    <text evidence="4">Belongs to the LOC1 family.</text>
</comment>
<proteinExistence type="inferred from homology"/>
<accession>Q4WDG1</accession>
<gene>
    <name type="primary">loc1</name>
    <name type="ORF">AFUA_6G04630</name>
</gene>
<keyword id="KW-0175">Coiled coil</keyword>
<keyword id="KW-0509">mRNA transport</keyword>
<keyword id="KW-0539">Nucleus</keyword>
<keyword id="KW-1185">Reference proteome</keyword>
<keyword id="KW-0690">Ribosome biogenesis</keyword>
<keyword id="KW-0813">Transport</keyword>
<dbReference type="EMBL" id="AAHF01000012">
    <property type="protein sequence ID" value="EAL85577.1"/>
    <property type="molecule type" value="Genomic_DNA"/>
</dbReference>
<dbReference type="RefSeq" id="XP_747615.1">
    <property type="nucleotide sequence ID" value="XM_742522.1"/>
</dbReference>
<dbReference type="SMR" id="Q4WDG1"/>
<dbReference type="FunCoup" id="Q4WDG1">
    <property type="interactions" value="331"/>
</dbReference>
<dbReference type="STRING" id="330879.Q4WDG1"/>
<dbReference type="EnsemblFungi" id="EAL85577">
    <property type="protein sequence ID" value="EAL85577"/>
    <property type="gene ID" value="AFUA_6G04630"/>
</dbReference>
<dbReference type="GeneID" id="3505215"/>
<dbReference type="KEGG" id="afm:AFUA_6G04630"/>
<dbReference type="VEuPathDB" id="FungiDB:Afu6g04630"/>
<dbReference type="eggNOG" id="ENOG502RY6R">
    <property type="taxonomic scope" value="Eukaryota"/>
</dbReference>
<dbReference type="HOGENOM" id="CLU_096593_0_0_1"/>
<dbReference type="InParanoid" id="Q4WDG1"/>
<dbReference type="OMA" id="NAEQEGH"/>
<dbReference type="OrthoDB" id="1743802at2759"/>
<dbReference type="Proteomes" id="UP000002530">
    <property type="component" value="Chromosome 6"/>
</dbReference>
<dbReference type="GO" id="GO:0005730">
    <property type="term" value="C:nucleolus"/>
    <property type="evidence" value="ECO:0000318"/>
    <property type="project" value="GO_Central"/>
</dbReference>
<dbReference type="GO" id="GO:0030687">
    <property type="term" value="C:preribosome, large subunit precursor"/>
    <property type="evidence" value="ECO:0000318"/>
    <property type="project" value="GO_Central"/>
</dbReference>
<dbReference type="GO" id="GO:0003729">
    <property type="term" value="F:mRNA binding"/>
    <property type="evidence" value="ECO:0000318"/>
    <property type="project" value="GO_Central"/>
</dbReference>
<dbReference type="GO" id="GO:0008298">
    <property type="term" value="P:intracellular mRNA localization"/>
    <property type="evidence" value="ECO:0000318"/>
    <property type="project" value="GO_Central"/>
</dbReference>
<dbReference type="GO" id="GO:0051028">
    <property type="term" value="P:mRNA transport"/>
    <property type="evidence" value="ECO:0007669"/>
    <property type="project" value="UniProtKB-KW"/>
</dbReference>
<dbReference type="GO" id="GO:0042273">
    <property type="term" value="P:ribosomal large subunit biogenesis"/>
    <property type="evidence" value="ECO:0000318"/>
    <property type="project" value="GO_Central"/>
</dbReference>
<dbReference type="InterPro" id="IPR037650">
    <property type="entry name" value="Loc1"/>
</dbReference>
<dbReference type="PANTHER" id="PTHR28028">
    <property type="entry name" value="60S RIBOSOMAL SUBUNIT ASSEMBLY/EXPORT PROTEIN LOC1"/>
    <property type="match status" value="1"/>
</dbReference>
<dbReference type="PANTHER" id="PTHR28028:SF1">
    <property type="entry name" value="60S RIBOSOMAL SUBUNIT ASSEMBLY_EXPORT PROTEIN LOC1"/>
    <property type="match status" value="1"/>
</dbReference>